<keyword id="KW-0460">Magnesium</keyword>
<keyword id="KW-0479">Metal-binding</keyword>
<keyword id="KW-0808">Transferase</keyword>
<name>OLCC_PENCN</name>
<sequence length="333" mass="37594">MDQLPAAELTNFISPSGPESRPVFHSICGIHDTANVQQKQTLDQNKVISAPLDYLLSFPGKDIRGQLISSFNEWLQIPEEKLSLIKRVVELLHTASLLIDDIQDSSQLRRGLPVAHNIFGVAQTINSANYAYFKAQSELHKIGDPRAVEIFTEELLRLHKGQGMDLYWRDSLTCPTEEEYLEMVSNKTGGLFRLAIKLMQLCSASEKDCVPLVEYLGIIFQIRDDYQNLQSEKYIENKGFGEDLTEGKFSFPIIHSIRSNSDSFQLINILKQKSEDTTVKLYAIKLLESTGSFEFCRQRIAQLTTQARSLLMEMGDPSQTAGIQGILAFLELK</sequence>
<dbReference type="EC" id="2.5.1.-" evidence="2"/>
<dbReference type="EC" id="2.5.1.1" evidence="1"/>
<dbReference type="EC" id="2.5.1.29" evidence="1"/>
<dbReference type="EC" id="2.5.1.10" evidence="1"/>
<dbReference type="SMR" id="P9WEQ2"/>
<dbReference type="UniPathway" id="UPA00213"/>
<dbReference type="GO" id="GO:0046872">
    <property type="term" value="F:metal ion binding"/>
    <property type="evidence" value="ECO:0007669"/>
    <property type="project" value="UniProtKB-KW"/>
</dbReference>
<dbReference type="GO" id="GO:0004659">
    <property type="term" value="F:prenyltransferase activity"/>
    <property type="evidence" value="ECO:0007669"/>
    <property type="project" value="InterPro"/>
</dbReference>
<dbReference type="GO" id="GO:0046165">
    <property type="term" value="P:alcohol biosynthetic process"/>
    <property type="evidence" value="ECO:0007669"/>
    <property type="project" value="UniProtKB-ARBA"/>
</dbReference>
<dbReference type="GO" id="GO:0043386">
    <property type="term" value="P:mycotoxin biosynthetic process"/>
    <property type="evidence" value="ECO:0007669"/>
    <property type="project" value="UniProtKB-ARBA"/>
</dbReference>
<dbReference type="GO" id="GO:0016114">
    <property type="term" value="P:terpenoid biosynthetic process"/>
    <property type="evidence" value="ECO:0007669"/>
    <property type="project" value="UniProtKB-UniPathway"/>
</dbReference>
<dbReference type="CDD" id="cd00685">
    <property type="entry name" value="Trans_IPPS_HT"/>
    <property type="match status" value="1"/>
</dbReference>
<dbReference type="Gene3D" id="1.10.600.10">
    <property type="entry name" value="Farnesyl Diphosphate Synthase"/>
    <property type="match status" value="1"/>
</dbReference>
<dbReference type="InterPro" id="IPR008949">
    <property type="entry name" value="Isoprenoid_synthase_dom_sf"/>
</dbReference>
<dbReference type="InterPro" id="IPR000092">
    <property type="entry name" value="Polyprenyl_synt"/>
</dbReference>
<dbReference type="InterPro" id="IPR033749">
    <property type="entry name" value="Polyprenyl_synt_CS"/>
</dbReference>
<dbReference type="PANTHER" id="PTHR12001">
    <property type="entry name" value="GERANYLGERANYL PYROPHOSPHATE SYNTHASE"/>
    <property type="match status" value="1"/>
</dbReference>
<dbReference type="PANTHER" id="PTHR12001:SF70">
    <property type="entry name" value="PYROPHOSPHATE SYNTHETASE ATMG, PUTATIVE (AFU_ORTHOLOGUE AFUA_8G02400)-RELATED"/>
    <property type="match status" value="1"/>
</dbReference>
<dbReference type="Pfam" id="PF00348">
    <property type="entry name" value="polyprenyl_synt"/>
    <property type="match status" value="1"/>
</dbReference>
<dbReference type="SFLD" id="SFLDS00005">
    <property type="entry name" value="Isoprenoid_Synthase_Type_I"/>
    <property type="match status" value="1"/>
</dbReference>
<dbReference type="SFLD" id="SFLDG01017">
    <property type="entry name" value="Polyprenyl_Transferase_Like"/>
    <property type="match status" value="1"/>
</dbReference>
<dbReference type="SUPFAM" id="SSF48576">
    <property type="entry name" value="Terpenoid synthases"/>
    <property type="match status" value="1"/>
</dbReference>
<dbReference type="PROSITE" id="PS00723">
    <property type="entry name" value="POLYPRENYL_SYNTHASE_1"/>
    <property type="match status" value="1"/>
</dbReference>
<dbReference type="PROSITE" id="PS00444">
    <property type="entry name" value="POLYPRENYL_SYNTHASE_2"/>
    <property type="match status" value="1"/>
</dbReference>
<comment type="function">
    <text evidence="2 5">Geranylgeranyl pyrophosphate synthase; part of the gene cluster that mediates the biosynthesis of 15-deoxyoxalicine B (PubMed:30090271). The first step of the pathway is the synthesis of nicotinyl-CoA from nicotinic acid by the nicotinic acid-CoA ligase olcI (PubMed:30090271). Nicotinyl-CoA is then a substrate of polyketide synthase olcA to produce 4-hydroxy-6-(3-pyridinyl)-2H-pyran-2-one (HPPO) which is further prenylated by the polyprenyl transferase olcH to yield geranylgeranyl-HPPO (PubMed:30090271). Geranylgeranyl pyrophosphate is provided by the cluster-specific geranylgeranyl pyrophosphate synthase olcC (PubMed:30090271). The FAD-dependent monooxygenase olcE catalyzes the epoxidation of geranylgeranyl-HPPO and the terpene cyclase olcD catalyzes the cyclization of the terpenoid component, resulting in the formation of the tricyclic terpene moiety seen in predecaturin E (PubMed:30090271). The cytochrome P450 monooxygenase then catalyzes the allylic oxidation of predecaturin E, which is followed by spirocylization with concomitant loss of one molecule of water to form decaturin E (PubMed:30090271). Decaturin E is the substrate of the cytochrome P450 monooxygenase olcJ which hydroxylates it at the C-29 position to form decaturin F (PubMed:30090271). The short-chain dehydrogenase/reductase olcF may catalyze the oxidation of decaturin F to generate the 29-hydroxyl-27-one intermediate, and subsequent hemiacetal formation probably leads to the formation of decaturin C (Probable). The dioxygenase olcK may be a peroxisomal enzyme that catalyzes the hydroxylation of decaturin C into decaturin A once decaturin C is shuttled into the peroxisome by the MFS transporter olcL (Probable). Finally the cytochrome P450 monooxygenase olcB catalyzes the oxidative rearrangement to yield 15-deoxyoxalicine B (PubMed:30090271). In the absence of olcJ, decaturin E may be shunted to a pathway in which it is oxidized to a ketone, possibly by olcF, to form decaturin D, which undergoes further allylic oxidation to yield decaturin G (PubMed:30090271). Moreover, in the absence of oclK or oclL, oclB can convert decaturin C into 15-deoxyoxalicine A (PubMed:30090271).</text>
</comment>
<comment type="catalytic activity">
    <reaction evidence="1">
        <text>isopentenyl diphosphate + dimethylallyl diphosphate = (2E)-geranyl diphosphate + diphosphate</text>
        <dbReference type="Rhea" id="RHEA:22408"/>
        <dbReference type="ChEBI" id="CHEBI:33019"/>
        <dbReference type="ChEBI" id="CHEBI:57623"/>
        <dbReference type="ChEBI" id="CHEBI:58057"/>
        <dbReference type="ChEBI" id="CHEBI:128769"/>
        <dbReference type="EC" id="2.5.1.1"/>
    </reaction>
</comment>
<comment type="catalytic activity">
    <reaction evidence="1">
        <text>isopentenyl diphosphate + (2E)-geranyl diphosphate = (2E,6E)-farnesyl diphosphate + diphosphate</text>
        <dbReference type="Rhea" id="RHEA:19361"/>
        <dbReference type="ChEBI" id="CHEBI:33019"/>
        <dbReference type="ChEBI" id="CHEBI:58057"/>
        <dbReference type="ChEBI" id="CHEBI:128769"/>
        <dbReference type="ChEBI" id="CHEBI:175763"/>
        <dbReference type="EC" id="2.5.1.10"/>
    </reaction>
</comment>
<comment type="catalytic activity">
    <reaction evidence="1">
        <text>isopentenyl diphosphate + (2E,6E)-farnesyl diphosphate = (2E,6E,10E)-geranylgeranyl diphosphate + diphosphate</text>
        <dbReference type="Rhea" id="RHEA:17653"/>
        <dbReference type="ChEBI" id="CHEBI:33019"/>
        <dbReference type="ChEBI" id="CHEBI:58756"/>
        <dbReference type="ChEBI" id="CHEBI:128769"/>
        <dbReference type="ChEBI" id="CHEBI:175763"/>
        <dbReference type="EC" id="2.5.1.29"/>
    </reaction>
</comment>
<comment type="cofactor">
    <cofactor evidence="1">
        <name>Mg(2+)</name>
        <dbReference type="ChEBI" id="CHEBI:18420"/>
    </cofactor>
    <text evidence="1">Binds 3 Mg(2+) ions per subunit.</text>
</comment>
<comment type="pathway">
    <text evidence="2">Secondary metabolite biosynthesis; terpenoid biosynthesis.</text>
</comment>
<comment type="disruption phenotype">
    <text evidence="2">Strongly decreases the production of 15-deoxyoxalicine B.</text>
</comment>
<comment type="miscellaneous">
    <text evidence="2">The 15-deoxyoxalicine B cluster is a rare cluster that contains its own geranylgeranyl pyrophosphate synthase (olcC), in contrast to other related clusters which rely on a FPP/GGPP synthase localized outside of the cluster.</text>
</comment>
<comment type="similarity">
    <text evidence="4">Belongs to the FPP/GGPP synthase family.</text>
</comment>
<gene>
    <name evidence="3" type="primary">olcC</name>
</gene>
<proteinExistence type="inferred from homology"/>
<organism>
    <name type="scientific">Penicillium canescens</name>
    <dbReference type="NCBI Taxonomy" id="5083"/>
    <lineage>
        <taxon>Eukaryota</taxon>
        <taxon>Fungi</taxon>
        <taxon>Dikarya</taxon>
        <taxon>Ascomycota</taxon>
        <taxon>Pezizomycotina</taxon>
        <taxon>Eurotiomycetes</taxon>
        <taxon>Eurotiomycetidae</taxon>
        <taxon>Eurotiales</taxon>
        <taxon>Aspergillaceae</taxon>
        <taxon>Penicillium</taxon>
    </lineage>
</organism>
<protein>
    <recommendedName>
        <fullName evidence="3">Geranylgeranyl pyrophosphate synthase olcC</fullName>
        <shortName evidence="4">GGPP synthase</shortName>
        <shortName evidence="4">GGPPSase</shortName>
        <ecNumber evidence="2">2.5.1.-</ecNumber>
    </recommendedName>
    <alternativeName>
        <fullName evidence="1">(2E,6E)-farnesyl diphosphate synthase</fullName>
    </alternativeName>
    <alternativeName>
        <fullName evidence="3">15-deoxyoxalicine B biosynthesis cluster protein C</fullName>
    </alternativeName>
    <alternativeName>
        <fullName evidence="1">Dimethylallyltranstransferase</fullName>
        <ecNumber evidence="1">2.5.1.1</ecNumber>
    </alternativeName>
    <alternativeName>
        <fullName evidence="1">Farnesyl diphosphate synthase</fullName>
    </alternativeName>
    <alternativeName>
        <fullName evidence="1">Farnesyltranstransferase</fullName>
        <ecNumber evidence="1">2.5.1.29</ecNumber>
    </alternativeName>
    <alternativeName>
        <fullName evidence="1">Geranylgeranyl diphosphate synthase</fullName>
    </alternativeName>
    <alternativeName>
        <fullName evidence="1">Geranyltranstransferase</fullName>
        <ecNumber evidence="1">2.5.1.10</ecNumber>
    </alternativeName>
</protein>
<evidence type="ECO:0000250" key="1">
    <source>
        <dbReference type="UniProtKB" id="Q12051"/>
    </source>
</evidence>
<evidence type="ECO:0000269" key="2">
    <source>
    </source>
</evidence>
<evidence type="ECO:0000303" key="3">
    <source>
    </source>
</evidence>
<evidence type="ECO:0000305" key="4"/>
<evidence type="ECO:0000305" key="5">
    <source>
    </source>
</evidence>
<feature type="chain" id="PRO_0000453889" description="Geranylgeranyl pyrophosphate synthase olcC">
    <location>
        <begin position="1"/>
        <end position="333"/>
    </location>
</feature>
<feature type="binding site" evidence="1">
    <location>
        <position position="61"/>
    </location>
    <ligand>
        <name>isopentenyl diphosphate</name>
        <dbReference type="ChEBI" id="CHEBI:128769"/>
    </ligand>
</feature>
<feature type="binding site" evidence="1">
    <location>
        <position position="64"/>
    </location>
    <ligand>
        <name>isopentenyl diphosphate</name>
        <dbReference type="ChEBI" id="CHEBI:128769"/>
    </ligand>
</feature>
<feature type="binding site" evidence="1">
    <location>
        <position position="93"/>
    </location>
    <ligand>
        <name>isopentenyl diphosphate</name>
        <dbReference type="ChEBI" id="CHEBI:128769"/>
    </ligand>
</feature>
<feature type="binding site" evidence="1">
    <location>
        <position position="100"/>
    </location>
    <ligand>
        <name>Mg(2+)</name>
        <dbReference type="ChEBI" id="CHEBI:18420"/>
        <label>1</label>
    </ligand>
</feature>
<feature type="binding site" evidence="1">
    <location>
        <position position="100"/>
    </location>
    <ligand>
        <name>Mg(2+)</name>
        <dbReference type="ChEBI" id="CHEBI:18420"/>
        <label>2</label>
    </ligand>
</feature>
<feature type="binding site" evidence="1">
    <location>
        <position position="104"/>
    </location>
    <ligand>
        <name>Mg(2+)</name>
        <dbReference type="ChEBI" id="CHEBI:18420"/>
        <label>1</label>
    </ligand>
</feature>
<feature type="binding site" evidence="1">
    <location>
        <position position="104"/>
    </location>
    <ligand>
        <name>Mg(2+)</name>
        <dbReference type="ChEBI" id="CHEBI:18420"/>
        <label>2</label>
    </ligand>
</feature>
<feature type="binding site" evidence="1">
    <location>
        <position position="109"/>
    </location>
    <ligand>
        <name>dimethylallyl diphosphate</name>
        <dbReference type="ChEBI" id="CHEBI:57623"/>
    </ligand>
</feature>
<feature type="binding site" evidence="1">
    <location>
        <position position="110"/>
    </location>
    <ligand>
        <name>isopentenyl diphosphate</name>
        <dbReference type="ChEBI" id="CHEBI:128769"/>
    </ligand>
</feature>
<feature type="binding site" evidence="1">
    <location>
        <position position="187"/>
    </location>
    <ligand>
        <name>dimethylallyl diphosphate</name>
        <dbReference type="ChEBI" id="CHEBI:57623"/>
    </ligand>
</feature>
<feature type="binding site" evidence="1">
    <location>
        <position position="188"/>
    </location>
    <ligand>
        <name>dimethylallyl diphosphate</name>
        <dbReference type="ChEBI" id="CHEBI:57623"/>
    </ligand>
</feature>
<feature type="binding site" evidence="1">
    <location>
        <position position="221"/>
    </location>
    <ligand>
        <name>dimethylallyl diphosphate</name>
        <dbReference type="ChEBI" id="CHEBI:57623"/>
    </ligand>
</feature>
<feature type="binding site" evidence="1">
    <location>
        <position position="224"/>
    </location>
    <ligand>
        <name>Mg(2+)</name>
        <dbReference type="ChEBI" id="CHEBI:18420"/>
        <label>3</label>
    </ligand>
</feature>
<feature type="binding site" evidence="1">
    <location>
        <position position="228"/>
    </location>
    <ligand>
        <name>dimethylallyl diphosphate</name>
        <dbReference type="ChEBI" id="CHEBI:57623"/>
    </ligand>
</feature>
<feature type="binding site" evidence="1">
    <location>
        <position position="238"/>
    </location>
    <ligand>
        <name>dimethylallyl diphosphate</name>
        <dbReference type="ChEBI" id="CHEBI:57623"/>
    </ligand>
</feature>
<feature type="binding site" evidence="1">
    <location>
        <position position="248"/>
    </location>
    <ligand>
        <name>dimethylallyl diphosphate</name>
        <dbReference type="ChEBI" id="CHEBI:57623"/>
    </ligand>
</feature>
<reference key="1">
    <citation type="journal article" date="2015" name="Chem. Sci.">
        <title>Genome mining and molecular characterization of the biosynthetic gene cluster of a diterpenic meroterpenoid, 15-deoxyoxalicine B, in Penicillium canescens.</title>
        <authorList>
            <person name="Yaegashi J."/>
            <person name="Romsdahl J."/>
            <person name="Chiang Y.M."/>
            <person name="Wang C.C.C."/>
        </authorList>
    </citation>
    <scope>FUNCTION</scope>
    <scope>DISRUPTION PHENOTYPE</scope>
    <scope>PATHWAY</scope>
</reference>
<reference key="2">
    <citation type="journal article" date="2016" name="Chem. Sci.">
        <title>Correction: Genome mining and molecular characterization of the biosynthetic gene cluster of a diterpenic meroterpenoid, 15-deoxyoxalicine B, in Penicillium canescens.</title>
        <authorList>
            <person name="Yaegashi J."/>
            <person name="Romsdahl J."/>
            <person name="Chiang Y.M."/>
            <person name="Wang C.C.C."/>
        </authorList>
    </citation>
    <scope>ERRATUM OF PUBMED:30090271</scope>
</reference>
<accession>P9WEQ2</accession>